<keyword id="KW-0067">ATP-binding</keyword>
<keyword id="KW-0460">Magnesium</keyword>
<keyword id="KW-0511">Multifunctional enzyme</keyword>
<keyword id="KW-0547">Nucleotide-binding</keyword>
<keyword id="KW-0548">Nucleotidyltransferase</keyword>
<keyword id="KW-0808">Transferase</keyword>
<evidence type="ECO:0000255" key="1">
    <source>
        <dbReference type="HAMAP-Rule" id="MF_00802"/>
    </source>
</evidence>
<name>GLNE_VIBVU</name>
<dbReference type="EC" id="2.7.7.89" evidence="1"/>
<dbReference type="EC" id="2.7.7.42" evidence="1"/>
<dbReference type="EMBL" id="AE016795">
    <property type="protein sequence ID" value="AAO09128.1"/>
    <property type="molecule type" value="Genomic_DNA"/>
</dbReference>
<dbReference type="RefSeq" id="WP_011078697.1">
    <property type="nucleotide sequence ID" value="NC_004459.3"/>
</dbReference>
<dbReference type="SMR" id="Q8DEH6"/>
<dbReference type="KEGG" id="vvu:VV1_0614"/>
<dbReference type="HOGENOM" id="CLU_006233_0_1_6"/>
<dbReference type="Proteomes" id="UP000002275">
    <property type="component" value="Chromosome 1"/>
</dbReference>
<dbReference type="GO" id="GO:0005829">
    <property type="term" value="C:cytosol"/>
    <property type="evidence" value="ECO:0007669"/>
    <property type="project" value="TreeGrafter"/>
</dbReference>
<dbReference type="GO" id="GO:0008882">
    <property type="term" value="F:[glutamate-ammonia-ligase] adenylyltransferase activity"/>
    <property type="evidence" value="ECO:0007669"/>
    <property type="project" value="UniProtKB-UniRule"/>
</dbReference>
<dbReference type="GO" id="GO:0047388">
    <property type="term" value="F:[glutamine synthetase]-adenylyl-L-tyrosine phosphorylase activity"/>
    <property type="evidence" value="ECO:0007669"/>
    <property type="project" value="UniProtKB-EC"/>
</dbReference>
<dbReference type="GO" id="GO:0005524">
    <property type="term" value="F:ATP binding"/>
    <property type="evidence" value="ECO:0007669"/>
    <property type="project" value="UniProtKB-UniRule"/>
</dbReference>
<dbReference type="GO" id="GO:0000287">
    <property type="term" value="F:magnesium ion binding"/>
    <property type="evidence" value="ECO:0007669"/>
    <property type="project" value="UniProtKB-UniRule"/>
</dbReference>
<dbReference type="GO" id="GO:0000820">
    <property type="term" value="P:regulation of glutamine family amino acid metabolic process"/>
    <property type="evidence" value="ECO:0007669"/>
    <property type="project" value="UniProtKB-UniRule"/>
</dbReference>
<dbReference type="CDD" id="cd05401">
    <property type="entry name" value="NT_GlnE_GlnD_like"/>
    <property type="match status" value="2"/>
</dbReference>
<dbReference type="FunFam" id="1.20.120.1510:FF:000001">
    <property type="entry name" value="Bifunctional glutamine synthetase adenylyltransferase/adenylyl-removing enzyme"/>
    <property type="match status" value="1"/>
</dbReference>
<dbReference type="FunFam" id="1.20.120.330:FF:000005">
    <property type="entry name" value="Bifunctional glutamine synthetase adenylyltransferase/adenylyl-removing enzyme"/>
    <property type="match status" value="1"/>
</dbReference>
<dbReference type="FunFam" id="1.20.120.330:FF:000008">
    <property type="entry name" value="Bifunctional glutamine synthetase adenylyltransferase/adenylyl-removing enzyme"/>
    <property type="match status" value="1"/>
</dbReference>
<dbReference type="FunFam" id="3.30.460.10:FF:000009">
    <property type="entry name" value="Bifunctional glutamine synthetase adenylyltransferase/adenylyl-removing enzyme"/>
    <property type="match status" value="1"/>
</dbReference>
<dbReference type="FunFam" id="3.30.460.10:FF:000014">
    <property type="entry name" value="Bifunctional glutamine synthetase adenylyltransferase/adenylyl-removing enzyme"/>
    <property type="match status" value="1"/>
</dbReference>
<dbReference type="Gene3D" id="1.20.120.1510">
    <property type="match status" value="1"/>
</dbReference>
<dbReference type="Gene3D" id="3.30.460.10">
    <property type="entry name" value="Beta Polymerase, domain 2"/>
    <property type="match status" value="2"/>
</dbReference>
<dbReference type="Gene3D" id="1.10.4050.10">
    <property type="entry name" value="Glutamine synthase adenylyltransferase GlnE"/>
    <property type="match status" value="1"/>
</dbReference>
<dbReference type="Gene3D" id="1.20.120.330">
    <property type="entry name" value="Nucleotidyltransferases domain 2"/>
    <property type="match status" value="2"/>
</dbReference>
<dbReference type="HAMAP" id="MF_00802">
    <property type="entry name" value="GlnE"/>
    <property type="match status" value="1"/>
</dbReference>
<dbReference type="InterPro" id="IPR023057">
    <property type="entry name" value="GlnE"/>
</dbReference>
<dbReference type="InterPro" id="IPR005190">
    <property type="entry name" value="GlnE_rpt_dom"/>
</dbReference>
<dbReference type="InterPro" id="IPR043519">
    <property type="entry name" value="NT_sf"/>
</dbReference>
<dbReference type="InterPro" id="IPR013546">
    <property type="entry name" value="PII_UdlTrfase/GS_AdlTrfase"/>
</dbReference>
<dbReference type="NCBIfam" id="NF008292">
    <property type="entry name" value="PRK11072.1"/>
    <property type="match status" value="1"/>
</dbReference>
<dbReference type="PANTHER" id="PTHR30621:SF0">
    <property type="entry name" value="BIFUNCTIONAL GLUTAMINE SYNTHETASE ADENYLYLTRANSFERASE_ADENYLYL-REMOVING ENZYME"/>
    <property type="match status" value="1"/>
</dbReference>
<dbReference type="PANTHER" id="PTHR30621">
    <property type="entry name" value="GLUTAMINE SYNTHETASE ADENYLYLTRANSFERASE"/>
    <property type="match status" value="1"/>
</dbReference>
<dbReference type="Pfam" id="PF08335">
    <property type="entry name" value="GlnD_UR_UTase"/>
    <property type="match status" value="2"/>
</dbReference>
<dbReference type="Pfam" id="PF03710">
    <property type="entry name" value="GlnE"/>
    <property type="match status" value="2"/>
</dbReference>
<dbReference type="SUPFAM" id="SSF81301">
    <property type="entry name" value="Nucleotidyltransferase"/>
    <property type="match status" value="2"/>
</dbReference>
<dbReference type="SUPFAM" id="SSF81593">
    <property type="entry name" value="Nucleotidyltransferase substrate binding subunit/domain"/>
    <property type="match status" value="2"/>
</dbReference>
<accession>Q8DEH6</accession>
<reference key="1">
    <citation type="submission" date="2002-12" db="EMBL/GenBank/DDBJ databases">
        <title>Complete genome sequence of Vibrio vulnificus CMCP6.</title>
        <authorList>
            <person name="Rhee J.H."/>
            <person name="Kim S.Y."/>
            <person name="Chung S.S."/>
            <person name="Kim J.J."/>
            <person name="Moon Y.H."/>
            <person name="Jeong H."/>
            <person name="Choy H.E."/>
        </authorList>
    </citation>
    <scope>NUCLEOTIDE SEQUENCE [LARGE SCALE GENOMIC DNA]</scope>
    <source>
        <strain>CMCP6</strain>
    </source>
</reference>
<gene>
    <name evidence="1" type="primary">glnE</name>
    <name type="ordered locus">VV1_0614</name>
</gene>
<feature type="chain" id="PRO_0000209283" description="Bifunctional glutamine synthetase adenylyltransferase/adenylyl-removing enzyme">
    <location>
        <begin position="1"/>
        <end position="950"/>
    </location>
</feature>
<feature type="region of interest" description="Adenylyl removase" evidence="1">
    <location>
        <begin position="1"/>
        <end position="443"/>
    </location>
</feature>
<feature type="region of interest" description="Adenylyl transferase" evidence="1">
    <location>
        <begin position="450"/>
        <end position="950"/>
    </location>
</feature>
<comment type="function">
    <text evidence="1">Involved in the regulation of glutamine synthetase GlnA, a key enzyme in the process to assimilate ammonia. When cellular nitrogen levels are high, the C-terminal adenylyl transferase (AT) inactivates GlnA by covalent transfer of an adenylyl group from ATP to specific tyrosine residue of GlnA, thus reducing its activity. Conversely, when nitrogen levels are low, the N-terminal adenylyl removase (AR) activates GlnA by removing the adenylyl group by phosphorolysis, increasing its activity. The regulatory region of GlnE binds the signal transduction protein PII (GlnB) which indicates the nitrogen status of the cell.</text>
</comment>
<comment type="catalytic activity">
    <reaction evidence="1">
        <text>[glutamine synthetase]-O(4)-(5'-adenylyl)-L-tyrosine + phosphate = [glutamine synthetase]-L-tyrosine + ADP</text>
        <dbReference type="Rhea" id="RHEA:43716"/>
        <dbReference type="Rhea" id="RHEA-COMP:10660"/>
        <dbReference type="Rhea" id="RHEA-COMP:10661"/>
        <dbReference type="ChEBI" id="CHEBI:43474"/>
        <dbReference type="ChEBI" id="CHEBI:46858"/>
        <dbReference type="ChEBI" id="CHEBI:83624"/>
        <dbReference type="ChEBI" id="CHEBI:456216"/>
        <dbReference type="EC" id="2.7.7.89"/>
    </reaction>
</comment>
<comment type="catalytic activity">
    <reaction evidence="1">
        <text>[glutamine synthetase]-L-tyrosine + ATP = [glutamine synthetase]-O(4)-(5'-adenylyl)-L-tyrosine + diphosphate</text>
        <dbReference type="Rhea" id="RHEA:18589"/>
        <dbReference type="Rhea" id="RHEA-COMP:10660"/>
        <dbReference type="Rhea" id="RHEA-COMP:10661"/>
        <dbReference type="ChEBI" id="CHEBI:30616"/>
        <dbReference type="ChEBI" id="CHEBI:33019"/>
        <dbReference type="ChEBI" id="CHEBI:46858"/>
        <dbReference type="ChEBI" id="CHEBI:83624"/>
        <dbReference type="EC" id="2.7.7.42"/>
    </reaction>
</comment>
<comment type="cofactor">
    <cofactor evidence="1">
        <name>Mg(2+)</name>
        <dbReference type="ChEBI" id="CHEBI:18420"/>
    </cofactor>
</comment>
<comment type="similarity">
    <text evidence="1">Belongs to the GlnE family.</text>
</comment>
<proteinExistence type="inferred from homology"/>
<organism>
    <name type="scientific">Vibrio vulnificus (strain CMCP6)</name>
    <dbReference type="NCBI Taxonomy" id="216895"/>
    <lineage>
        <taxon>Bacteria</taxon>
        <taxon>Pseudomonadati</taxon>
        <taxon>Pseudomonadota</taxon>
        <taxon>Gammaproteobacteria</taxon>
        <taxon>Vibrionales</taxon>
        <taxon>Vibrionaceae</taxon>
        <taxon>Vibrio</taxon>
    </lineage>
</organism>
<sequence length="950" mass="109007">MSLPSPLIPVAELAMQNAQQSGYLEHWPQALITQFQFISGLSKFVVETVQRDAQLAESLPEMLAQESRQEAYRTRLAEQLQACHDEVAGHRVLRQFRNREMVYIAWKDFTQAWSLEESLSHLSELAEAMIFETYQWQYQLCCKEWGTPTNAQGEAQPMLIIGMGKLGGGELNFSSDIDLIFTYPENGETQGARRSIANAQFFTRLGQRLIKALDQQTFDGFCYRVDMRLRPFGESGPLVMSYAALEDYYQEQGRDWERYAMIKARVMGREMYPEYQELRQMLRPFVFRRYIDFSAIQSLRRMKSMISSEVRRRGLSNNIKLGAGGIREIEFIAQVFQLIRGGREPALRQRGLLVTLEAIKQLQLLEEAQVCHLVEAYKYLRRLENLLQAMADKQTQTLPDNELEQLALAVAMGYSQWQALQNDVQQHMAKVHAVFVTLIGDEEDEVSPVERHFNELWDMAHNPEVIEQILQNDLACQNAATMSEQIIQFKADLAKKTLGPRGREVLNRLMPKLFSAIFADADAQFGLPRVLHLLHNIATRTTYLELLDEHPAALTQLVRLCTASPMISEQLARYPILLDELIDPQQLYNPIALDAYRTELRDFLARIPEDDVEQQMDALRQFKQICSLRIAAADIAGVLPVMKVSDHLTYLAEAIVEAVVHQAWQQVAEKYGEPTHLKDREGKGFAVVGYGKVGGWELGYNSDLDVVFLHDCPVNVYTDGKKEIDGRQFYLRLAQRIIHIFSTRTASGILYEVDTRLRPSGASGLLVCPVDAFEEYQHNDAWTWEHQALVRARMIYGDEHLASEFHRVRHQVLAKPREQAKLQKEVADMRAKMRDHLGGKKSDRFMLKQDQGGITDIEFLAQYLVLNYSAEKPKLTRWCDNVRIFETLIAQGVMEEAQAMLLTQAYTTMRDEIHRRNLLNLDADVALDKFVALRQGVSKAWQEWLESSTI</sequence>
<protein>
    <recommendedName>
        <fullName evidence="1">Bifunctional glutamine synthetase adenylyltransferase/adenylyl-removing enzyme</fullName>
    </recommendedName>
    <alternativeName>
        <fullName evidence="1">ATP:glutamine synthetase adenylyltransferase</fullName>
    </alternativeName>
    <alternativeName>
        <fullName evidence="1">ATase</fullName>
    </alternativeName>
    <domain>
        <recommendedName>
            <fullName evidence="1">Glutamine synthetase adenylyl-L-tyrosine phosphorylase</fullName>
            <ecNumber evidence="1">2.7.7.89</ecNumber>
        </recommendedName>
        <alternativeName>
            <fullName evidence="1">Adenylyl removase</fullName>
            <shortName evidence="1">AR</shortName>
            <shortName evidence="1">AT-N</shortName>
        </alternativeName>
    </domain>
    <domain>
        <recommendedName>
            <fullName evidence="1">Glutamine synthetase adenylyl transferase</fullName>
            <ecNumber evidence="1">2.7.7.42</ecNumber>
        </recommendedName>
        <alternativeName>
            <fullName evidence="1">Adenylyl transferase</fullName>
            <shortName evidence="1">AT</shortName>
            <shortName evidence="1">AT-C</shortName>
        </alternativeName>
    </domain>
</protein>